<organism>
    <name type="scientific">Bacillus subtilis (strain 168)</name>
    <dbReference type="NCBI Taxonomy" id="224308"/>
    <lineage>
        <taxon>Bacteria</taxon>
        <taxon>Bacillati</taxon>
        <taxon>Bacillota</taxon>
        <taxon>Bacilli</taxon>
        <taxon>Bacillales</taxon>
        <taxon>Bacillaceae</taxon>
        <taxon>Bacillus</taxon>
    </lineage>
</organism>
<gene>
    <name evidence="1" type="primary">metE</name>
    <name type="synonym">metC</name>
    <name type="ordered locus">BSU13180</name>
</gene>
<evidence type="ECO:0000255" key="1">
    <source>
        <dbReference type="HAMAP-Rule" id="MF_00172"/>
    </source>
</evidence>
<evidence type="ECO:0000269" key="2">
    <source>
    </source>
</evidence>
<evidence type="ECO:0000269" key="3">
    <source>
    </source>
</evidence>
<evidence type="ECO:0000305" key="4"/>
<evidence type="ECO:0000305" key="5">
    <source>
    </source>
</evidence>
<reference key="1">
    <citation type="submission" date="1997-11" db="EMBL/GenBank/DDBJ databases">
        <title>Sequence of the Bacillus subtilis genome between xlyA and ykoR.</title>
        <authorList>
            <person name="Devine K.M."/>
        </authorList>
    </citation>
    <scope>NUCLEOTIDE SEQUENCE [GENOMIC DNA]</scope>
    <source>
        <strain>168</strain>
    </source>
</reference>
<reference key="2">
    <citation type="journal article" date="1997" name="Nature">
        <title>The complete genome sequence of the Gram-positive bacterium Bacillus subtilis.</title>
        <authorList>
            <person name="Kunst F."/>
            <person name="Ogasawara N."/>
            <person name="Moszer I."/>
            <person name="Albertini A.M."/>
            <person name="Alloni G."/>
            <person name="Azevedo V."/>
            <person name="Bertero M.G."/>
            <person name="Bessieres P."/>
            <person name="Bolotin A."/>
            <person name="Borchert S."/>
            <person name="Borriss R."/>
            <person name="Boursier L."/>
            <person name="Brans A."/>
            <person name="Braun M."/>
            <person name="Brignell S.C."/>
            <person name="Bron S."/>
            <person name="Brouillet S."/>
            <person name="Bruschi C.V."/>
            <person name="Caldwell B."/>
            <person name="Capuano V."/>
            <person name="Carter N.M."/>
            <person name="Choi S.-K."/>
            <person name="Codani J.-J."/>
            <person name="Connerton I.F."/>
            <person name="Cummings N.J."/>
            <person name="Daniel R.A."/>
            <person name="Denizot F."/>
            <person name="Devine K.M."/>
            <person name="Duesterhoeft A."/>
            <person name="Ehrlich S.D."/>
            <person name="Emmerson P.T."/>
            <person name="Entian K.-D."/>
            <person name="Errington J."/>
            <person name="Fabret C."/>
            <person name="Ferrari E."/>
            <person name="Foulger D."/>
            <person name="Fritz C."/>
            <person name="Fujita M."/>
            <person name="Fujita Y."/>
            <person name="Fuma S."/>
            <person name="Galizzi A."/>
            <person name="Galleron N."/>
            <person name="Ghim S.-Y."/>
            <person name="Glaser P."/>
            <person name="Goffeau A."/>
            <person name="Golightly E.J."/>
            <person name="Grandi G."/>
            <person name="Guiseppi G."/>
            <person name="Guy B.J."/>
            <person name="Haga K."/>
            <person name="Haiech J."/>
            <person name="Harwood C.R."/>
            <person name="Henaut A."/>
            <person name="Hilbert H."/>
            <person name="Holsappel S."/>
            <person name="Hosono S."/>
            <person name="Hullo M.-F."/>
            <person name="Itaya M."/>
            <person name="Jones L.-M."/>
            <person name="Joris B."/>
            <person name="Karamata D."/>
            <person name="Kasahara Y."/>
            <person name="Klaerr-Blanchard M."/>
            <person name="Klein C."/>
            <person name="Kobayashi Y."/>
            <person name="Koetter P."/>
            <person name="Koningstein G."/>
            <person name="Krogh S."/>
            <person name="Kumano M."/>
            <person name="Kurita K."/>
            <person name="Lapidus A."/>
            <person name="Lardinois S."/>
            <person name="Lauber J."/>
            <person name="Lazarevic V."/>
            <person name="Lee S.-M."/>
            <person name="Levine A."/>
            <person name="Liu H."/>
            <person name="Masuda S."/>
            <person name="Mauel C."/>
            <person name="Medigue C."/>
            <person name="Medina N."/>
            <person name="Mellado R.P."/>
            <person name="Mizuno M."/>
            <person name="Moestl D."/>
            <person name="Nakai S."/>
            <person name="Noback M."/>
            <person name="Noone D."/>
            <person name="O'Reilly M."/>
            <person name="Ogawa K."/>
            <person name="Ogiwara A."/>
            <person name="Oudega B."/>
            <person name="Park S.-H."/>
            <person name="Parro V."/>
            <person name="Pohl T.M."/>
            <person name="Portetelle D."/>
            <person name="Porwollik S."/>
            <person name="Prescott A.M."/>
            <person name="Presecan E."/>
            <person name="Pujic P."/>
            <person name="Purnelle B."/>
            <person name="Rapoport G."/>
            <person name="Rey M."/>
            <person name="Reynolds S."/>
            <person name="Rieger M."/>
            <person name="Rivolta C."/>
            <person name="Rocha E."/>
            <person name="Roche B."/>
            <person name="Rose M."/>
            <person name="Sadaie Y."/>
            <person name="Sato T."/>
            <person name="Scanlan E."/>
            <person name="Schleich S."/>
            <person name="Schroeter R."/>
            <person name="Scoffone F."/>
            <person name="Sekiguchi J."/>
            <person name="Sekowska A."/>
            <person name="Seror S.J."/>
            <person name="Serror P."/>
            <person name="Shin B.-S."/>
            <person name="Soldo B."/>
            <person name="Sorokin A."/>
            <person name="Tacconi E."/>
            <person name="Takagi T."/>
            <person name="Takahashi H."/>
            <person name="Takemaru K."/>
            <person name="Takeuchi M."/>
            <person name="Tamakoshi A."/>
            <person name="Tanaka T."/>
            <person name="Terpstra P."/>
            <person name="Tognoni A."/>
            <person name="Tosato V."/>
            <person name="Uchiyama S."/>
            <person name="Vandenbol M."/>
            <person name="Vannier F."/>
            <person name="Vassarotti A."/>
            <person name="Viari A."/>
            <person name="Wambutt R."/>
            <person name="Wedler E."/>
            <person name="Wedler H."/>
            <person name="Weitzenegger T."/>
            <person name="Winters P."/>
            <person name="Wipat A."/>
            <person name="Yamamoto H."/>
            <person name="Yamane K."/>
            <person name="Yasumoto K."/>
            <person name="Yata K."/>
            <person name="Yoshida K."/>
            <person name="Yoshikawa H.-F."/>
            <person name="Zumstein E."/>
            <person name="Yoshikawa H."/>
            <person name="Danchin A."/>
        </authorList>
    </citation>
    <scope>NUCLEOTIDE SEQUENCE [LARGE SCALE GENOMIC DNA]</scope>
    <source>
        <strain>168</strain>
    </source>
</reference>
<reference key="3">
    <citation type="journal article" date="2009" name="Microbiology">
        <title>From a consortium sequence to a unified sequence: the Bacillus subtilis 168 reference genome a decade later.</title>
        <authorList>
            <person name="Barbe V."/>
            <person name="Cruveiller S."/>
            <person name="Kunst F."/>
            <person name="Lenoble P."/>
            <person name="Meurice G."/>
            <person name="Sekowska A."/>
            <person name="Vallenet D."/>
            <person name="Wang T."/>
            <person name="Moszer I."/>
            <person name="Medigue C."/>
            <person name="Danchin A."/>
        </authorList>
    </citation>
    <scope>SEQUENCE REVISION TO 15; 302; 309; 328 AND 446</scope>
</reference>
<reference key="4">
    <citation type="journal article" date="1997" name="Electrophoresis">
        <title>First steps from a two-dimensional protein index towards a response-regulation map for Bacillus subtilis.</title>
        <authorList>
            <person name="Antelmann H."/>
            <person name="Bernhardt J."/>
            <person name="Schmid R."/>
            <person name="Mach H."/>
            <person name="Voelker U."/>
            <person name="Hecker M."/>
        </authorList>
    </citation>
    <scope>PROTEIN SEQUENCE OF 2-24</scope>
    <source>
        <strain>168 / IS58</strain>
    </source>
</reference>
<reference key="5">
    <citation type="journal article" date="2014" name="Antioxid. Redox Signal.">
        <title>Redox regulation in Bacillus subtilis: The bacilliredoxins BrxA(YphP) and BrxB(YqiW) function in de-bacillithiolation of S-bacillithiolated OhrR and MetE.</title>
        <authorList>
            <person name="Gaballa A."/>
            <person name="Chi B.K."/>
            <person name="Roberts A.A."/>
            <person name="Becher D."/>
            <person name="Hamilton C.J."/>
            <person name="Antelmann H."/>
            <person name="Helmann J.D."/>
        </authorList>
    </citation>
    <scope>PTM</scope>
    <scope>POST-TRANSLATIONAL MODIFICATION AT CYS-719</scope>
</reference>
<comment type="function">
    <text evidence="1">Catalyzes the transfer of a methyl group from 5-methyltetrahydrofolate to homocysteine resulting in methionine formation.</text>
</comment>
<comment type="catalytic activity">
    <reaction evidence="1">
        <text>5-methyltetrahydropteroyltri-L-glutamate + L-homocysteine = tetrahydropteroyltri-L-glutamate + L-methionine</text>
        <dbReference type="Rhea" id="RHEA:21196"/>
        <dbReference type="ChEBI" id="CHEBI:57844"/>
        <dbReference type="ChEBI" id="CHEBI:58140"/>
        <dbReference type="ChEBI" id="CHEBI:58199"/>
        <dbReference type="ChEBI" id="CHEBI:58207"/>
        <dbReference type="EC" id="2.1.1.14"/>
    </reaction>
</comment>
<comment type="cofactor">
    <cofactor evidence="1">
        <name>Zn(2+)</name>
        <dbReference type="ChEBI" id="CHEBI:29105"/>
    </cofactor>
    <text evidence="1">Binds 1 zinc ion per subunit.</text>
</comment>
<comment type="pathway">
    <text evidence="1">Amino-acid biosynthesis; L-methionine biosynthesis via de novo pathway; L-methionine from L-homocysteine (MetE route): step 1/1.</text>
</comment>
<comment type="induction">
    <text>By superoxide.</text>
</comment>
<comment type="PTM">
    <text evidence="5">In response to oxidative stress, Cys-719 can react with bacillithiol (BSH) to form mixed disulfides. S-bacillithiolation leads to loss of catalytic activity and methionine auxotrophy.</text>
</comment>
<comment type="similarity">
    <text evidence="1 4">Belongs to the vitamin-B12 independent methionine synthase family.</text>
</comment>
<name>METE_BACSU</name>
<keyword id="KW-0028">Amino-acid biosynthesis</keyword>
<keyword id="KW-0903">Direct protein sequencing</keyword>
<keyword id="KW-0479">Metal-binding</keyword>
<keyword id="KW-0486">Methionine biosynthesis</keyword>
<keyword id="KW-0489">Methyltransferase</keyword>
<keyword id="KW-1185">Reference proteome</keyword>
<keyword id="KW-0677">Repeat</keyword>
<keyword id="KW-0808">Transferase</keyword>
<keyword id="KW-0862">Zinc</keyword>
<sequence length="762" mass="86806">MTTIKTSNLGFPRIGLNREWKKALEAYWKGSTDKDTFLKQIDELFLSAVKTQIDQQIDVVPVSDFTQYDHVLDTAVSFNWIPKRFRHLTDATDTYFAIARGIKDAVSSEMTKWFNTNYHYIVPEYDESIEFRLTRNKQLEDYRRIKQEYGVETKPVIVGPYTFVTLAKGYEPSEAKAIQKRLVPLYVQLLKELEEEGVKWVQIDEPALVTASSEDVRGAKELFESITSELSSLNVLLQTYFDSVDAYEELISYPVQGIGLDFVHDKGRNLEQLKTHGFPTDKVLAAGVIDGRNIWKADLEERLDAVLDILSIAKVDELWIQPSSSLLHVPVAKHPDEHLEKDLLNGLSYAKEKLAELTALKEGLVSGKAAISEEIQQAKADIQALKQFATGANSEQKKELEQLTDKDFKRPIPFEERLALQNESLGLPLLPTTTIGSFPQSAEVRSARQKWRKAEWSDEQYQNFINAETKRWIDIQEELELDVLVHGEFERTDMVEYFGEKLAGFAFTKYAWVQSYGSRCVRPPVIYGDVEFIEPMTVKDTVYAQSLTSKHVKGMLTGPVTILNWSFPRNDISRKEIAFQIGLALRKEVKALEDAGIQIIQVDEPALREGLPLKTRDWDEYLTWAAEAFRLTTSSVKNETQIHTHMCYSNFEDIVDTINDLDADVITIEHSRSHGGFLDYLKNHPYLKGLGLGVYDIHSPRVPSTEEMYNIIVDALAVCPTDRFWVNPDCGLKTRQQEETVAALKNMVEAAKQARAQQTQLV</sequence>
<dbReference type="EC" id="2.1.1.14" evidence="1"/>
<dbReference type="EMBL" id="AJ002571">
    <property type="protein sequence ID" value="CAA05597.1"/>
    <property type="molecule type" value="Genomic_DNA"/>
</dbReference>
<dbReference type="EMBL" id="AL009126">
    <property type="protein sequence ID" value="CAB13175.2"/>
    <property type="molecule type" value="Genomic_DNA"/>
</dbReference>
<dbReference type="PIR" id="C69657">
    <property type="entry name" value="C69657"/>
</dbReference>
<dbReference type="RefSeq" id="NP_389201.2">
    <property type="nucleotide sequence ID" value="NC_000964.3"/>
</dbReference>
<dbReference type="RefSeq" id="WP_003232565.1">
    <property type="nucleotide sequence ID" value="NZ_OZ025638.1"/>
</dbReference>
<dbReference type="SMR" id="P80877"/>
<dbReference type="FunCoup" id="P80877">
    <property type="interactions" value="370"/>
</dbReference>
<dbReference type="IntAct" id="P80877">
    <property type="interactions" value="2"/>
</dbReference>
<dbReference type="MINT" id="P80877"/>
<dbReference type="STRING" id="224308.BSU13180"/>
<dbReference type="PaxDb" id="224308-BSU13180"/>
<dbReference type="EnsemblBacteria" id="CAB13175">
    <property type="protein sequence ID" value="CAB13175"/>
    <property type="gene ID" value="BSU_13180"/>
</dbReference>
<dbReference type="GeneID" id="936480"/>
<dbReference type="KEGG" id="bsu:BSU13180"/>
<dbReference type="PATRIC" id="fig|224308.179.peg.1431"/>
<dbReference type="eggNOG" id="COG0620">
    <property type="taxonomic scope" value="Bacteria"/>
</dbReference>
<dbReference type="InParanoid" id="P80877"/>
<dbReference type="OrthoDB" id="244285at2"/>
<dbReference type="PhylomeDB" id="P80877"/>
<dbReference type="BioCyc" id="BSUB:BSU13180-MONOMER"/>
<dbReference type="BioCyc" id="MetaCyc:MONOMER-14559"/>
<dbReference type="UniPathway" id="UPA00051">
    <property type="reaction ID" value="UER00082"/>
</dbReference>
<dbReference type="Proteomes" id="UP000001570">
    <property type="component" value="Chromosome"/>
</dbReference>
<dbReference type="GO" id="GO:0003871">
    <property type="term" value="F:5-methyltetrahydropteroyltriglutamate-homocysteine S-methyltransferase activity"/>
    <property type="evidence" value="ECO:0007669"/>
    <property type="project" value="UniProtKB-UniRule"/>
</dbReference>
<dbReference type="GO" id="GO:0008270">
    <property type="term" value="F:zinc ion binding"/>
    <property type="evidence" value="ECO:0007669"/>
    <property type="project" value="InterPro"/>
</dbReference>
<dbReference type="GO" id="GO:0009086">
    <property type="term" value="P:methionine biosynthetic process"/>
    <property type="evidence" value="ECO:0007669"/>
    <property type="project" value="UniProtKB-UniRule"/>
</dbReference>
<dbReference type="GO" id="GO:0032259">
    <property type="term" value="P:methylation"/>
    <property type="evidence" value="ECO:0007669"/>
    <property type="project" value="UniProtKB-KW"/>
</dbReference>
<dbReference type="CDD" id="cd03311">
    <property type="entry name" value="CIMS_C_terminal_like"/>
    <property type="match status" value="1"/>
</dbReference>
<dbReference type="CDD" id="cd03312">
    <property type="entry name" value="CIMS_N_terminal_like"/>
    <property type="match status" value="1"/>
</dbReference>
<dbReference type="Gene3D" id="3.20.20.210">
    <property type="match status" value="2"/>
</dbReference>
<dbReference type="HAMAP" id="MF_00172">
    <property type="entry name" value="Meth_synth"/>
    <property type="match status" value="1"/>
</dbReference>
<dbReference type="InterPro" id="IPR013215">
    <property type="entry name" value="Cbl-indep_Met_Synth_N"/>
</dbReference>
<dbReference type="InterPro" id="IPR006276">
    <property type="entry name" value="Cobalamin-indep_Met_synthase"/>
</dbReference>
<dbReference type="InterPro" id="IPR002629">
    <property type="entry name" value="Met_Synth_C/arc"/>
</dbReference>
<dbReference type="InterPro" id="IPR038071">
    <property type="entry name" value="UROD/MetE-like_sf"/>
</dbReference>
<dbReference type="NCBIfam" id="TIGR01371">
    <property type="entry name" value="met_syn_B12ind"/>
    <property type="match status" value="1"/>
</dbReference>
<dbReference type="NCBIfam" id="NF003556">
    <property type="entry name" value="PRK05222.1"/>
    <property type="match status" value="1"/>
</dbReference>
<dbReference type="PANTHER" id="PTHR30519">
    <property type="entry name" value="5-METHYLTETRAHYDROPTEROYLTRIGLUTAMATE--HOMOCYSTEINE METHYLTRANSFERASE"/>
    <property type="match status" value="1"/>
</dbReference>
<dbReference type="Pfam" id="PF08267">
    <property type="entry name" value="Meth_synt_1"/>
    <property type="match status" value="1"/>
</dbReference>
<dbReference type="Pfam" id="PF01717">
    <property type="entry name" value="Meth_synt_2"/>
    <property type="match status" value="1"/>
</dbReference>
<dbReference type="PIRSF" id="PIRSF000382">
    <property type="entry name" value="MeTrfase_B12_ind"/>
    <property type="match status" value="1"/>
</dbReference>
<dbReference type="SUPFAM" id="SSF51726">
    <property type="entry name" value="UROD/MetE-like"/>
    <property type="match status" value="2"/>
</dbReference>
<protein>
    <recommendedName>
        <fullName evidence="1">5-methyltetrahydropteroyltriglutamate--homocysteine methyltransferase</fullName>
        <ecNumber evidence="1">2.1.1.14</ecNumber>
    </recommendedName>
    <alternativeName>
        <fullName evidence="1">Cobalamin-independent methionine synthase</fullName>
    </alternativeName>
    <alternativeName>
        <fullName evidence="1">Methionine synthase, vitamin-B12 independent isozyme</fullName>
    </alternativeName>
    <alternativeName>
        <fullName>Superoxide-inducible protein 9</fullName>
        <shortName>SOI9</shortName>
    </alternativeName>
</protein>
<proteinExistence type="evidence at protein level"/>
<accession>P80877</accession>
<accession>O34386</accession>
<feature type="initiator methionine" description="Removed" evidence="3">
    <location>
        <position position="1"/>
    </location>
</feature>
<feature type="chain" id="PRO_0000098613" description="5-methyltetrahydropteroyltriglutamate--homocysteine methyltransferase">
    <location>
        <begin position="2"/>
        <end position="762"/>
    </location>
</feature>
<feature type="active site" description="Proton donor" evidence="1">
    <location>
        <position position="698"/>
    </location>
</feature>
<feature type="binding site" evidence="1">
    <location>
        <begin position="18"/>
        <end position="21"/>
    </location>
    <ligand>
        <name>5-methyltetrahydropteroyltri-L-glutamate</name>
        <dbReference type="ChEBI" id="CHEBI:58207"/>
    </ligand>
</feature>
<feature type="binding site" evidence="1">
    <location>
        <position position="112"/>
    </location>
    <ligand>
        <name>5-methyltetrahydropteroyltri-L-glutamate</name>
        <dbReference type="ChEBI" id="CHEBI:58207"/>
    </ligand>
</feature>
<feature type="binding site" evidence="1">
    <location>
        <begin position="435"/>
        <end position="437"/>
    </location>
    <ligand>
        <name>L-homocysteine</name>
        <dbReference type="ChEBI" id="CHEBI:58199"/>
    </ligand>
</feature>
<feature type="binding site" evidence="1">
    <location>
        <begin position="435"/>
        <end position="437"/>
    </location>
    <ligand>
        <name>L-methionine</name>
        <dbReference type="ChEBI" id="CHEBI:57844"/>
    </ligand>
</feature>
<feature type="binding site" evidence="1">
    <location>
        <position position="488"/>
    </location>
    <ligand>
        <name>L-homocysteine</name>
        <dbReference type="ChEBI" id="CHEBI:58199"/>
    </ligand>
</feature>
<feature type="binding site" evidence="1">
    <location>
        <position position="488"/>
    </location>
    <ligand>
        <name>L-methionine</name>
        <dbReference type="ChEBI" id="CHEBI:57844"/>
    </ligand>
</feature>
<feature type="binding site" evidence="1">
    <location>
        <begin position="519"/>
        <end position="520"/>
    </location>
    <ligand>
        <name>5-methyltetrahydropteroyltri-L-glutamate</name>
        <dbReference type="ChEBI" id="CHEBI:58207"/>
    </ligand>
</feature>
<feature type="binding site" evidence="1">
    <location>
        <position position="565"/>
    </location>
    <ligand>
        <name>5-methyltetrahydropteroyltri-L-glutamate</name>
        <dbReference type="ChEBI" id="CHEBI:58207"/>
    </ligand>
</feature>
<feature type="binding site" evidence="1">
    <location>
        <position position="603"/>
    </location>
    <ligand>
        <name>L-homocysteine</name>
        <dbReference type="ChEBI" id="CHEBI:58199"/>
    </ligand>
</feature>
<feature type="binding site" evidence="1">
    <location>
        <position position="603"/>
    </location>
    <ligand>
        <name>L-methionine</name>
        <dbReference type="ChEBI" id="CHEBI:57844"/>
    </ligand>
</feature>
<feature type="binding site" evidence="1">
    <location>
        <position position="609"/>
    </location>
    <ligand>
        <name>5-methyltetrahydropteroyltri-L-glutamate</name>
        <dbReference type="ChEBI" id="CHEBI:58207"/>
    </ligand>
</feature>
<feature type="binding site" evidence="1">
    <location>
        <position position="645"/>
    </location>
    <ligand>
        <name>Zn(2+)</name>
        <dbReference type="ChEBI" id="CHEBI:29105"/>
        <note>catalytic</note>
    </ligand>
</feature>
<feature type="binding site" evidence="1">
    <location>
        <position position="647"/>
    </location>
    <ligand>
        <name>Zn(2+)</name>
        <dbReference type="ChEBI" id="CHEBI:29105"/>
        <note>catalytic</note>
    </ligand>
</feature>
<feature type="binding site" evidence="1">
    <location>
        <position position="669"/>
    </location>
    <ligand>
        <name>Zn(2+)</name>
        <dbReference type="ChEBI" id="CHEBI:29105"/>
        <note>catalytic</note>
    </ligand>
</feature>
<feature type="binding site" evidence="1">
    <location>
        <position position="730"/>
    </location>
    <ligand>
        <name>Zn(2+)</name>
        <dbReference type="ChEBI" id="CHEBI:29105"/>
        <note>catalytic</note>
    </ligand>
</feature>
<feature type="modified residue" description="S-bacillithiol cysteine disulfide" evidence="2">
    <location>
        <position position="719"/>
    </location>
</feature>
<feature type="sequence conflict" description="In Ref. 1; CAA05597." evidence="4" ref="1">
    <original>G</original>
    <variation>D</variation>
    <location>
        <position position="15"/>
    </location>
</feature>
<feature type="sequence conflict" description="In Ref. 4; AA sequence." evidence="4" ref="4">
    <original>W</original>
    <variation>Q</variation>
    <location>
        <position position="20"/>
    </location>
</feature>
<feature type="sequence conflict" description="In Ref. 1; CAA05597." evidence="4" ref="1">
    <original>R</original>
    <variation>S</variation>
    <location>
        <position position="302"/>
    </location>
</feature>
<feature type="sequence conflict" description="In Ref. 1; CAA05597." evidence="4" ref="1">
    <original>I</original>
    <variation>V</variation>
    <location>
        <position position="309"/>
    </location>
</feature>
<feature type="sequence conflict" description="In Ref. 1; CAA05597." evidence="4" ref="1">
    <original>H</original>
    <variation>D</variation>
    <location>
        <position position="328"/>
    </location>
</feature>
<feature type="sequence conflict" description="In Ref. 1; CAA05597." evidence="4" ref="1">
    <original>S</original>
    <variation>R</variation>
    <location>
        <position position="446"/>
    </location>
</feature>